<proteinExistence type="inferred from homology"/>
<name>CYB6_RIPO1</name>
<gene>
    <name evidence="1" type="primary">petB</name>
    <name type="ordered locus">PCC8801_3538</name>
</gene>
<dbReference type="EMBL" id="CP001287">
    <property type="protein sequence ID" value="ACK67503.1"/>
    <property type="molecule type" value="Genomic_DNA"/>
</dbReference>
<dbReference type="RefSeq" id="WP_012596761.1">
    <property type="nucleotide sequence ID" value="NC_011726.1"/>
</dbReference>
<dbReference type="SMR" id="B7K1G1"/>
<dbReference type="STRING" id="41431.PCC8801_3538"/>
<dbReference type="KEGG" id="cyp:PCC8801_3538"/>
<dbReference type="eggNOG" id="COG1290">
    <property type="taxonomic scope" value="Bacteria"/>
</dbReference>
<dbReference type="HOGENOM" id="CLU_031114_0_2_3"/>
<dbReference type="OrthoDB" id="9804503at2"/>
<dbReference type="Proteomes" id="UP000008204">
    <property type="component" value="Chromosome"/>
</dbReference>
<dbReference type="GO" id="GO:0031676">
    <property type="term" value="C:plasma membrane-derived thylakoid membrane"/>
    <property type="evidence" value="ECO:0007669"/>
    <property type="project" value="UniProtKB-SubCell"/>
</dbReference>
<dbReference type="GO" id="GO:0045158">
    <property type="term" value="F:electron transporter, transferring electrons within cytochrome b6/f complex of photosystem II activity"/>
    <property type="evidence" value="ECO:0007669"/>
    <property type="project" value="UniProtKB-UniRule"/>
</dbReference>
<dbReference type="GO" id="GO:0046872">
    <property type="term" value="F:metal ion binding"/>
    <property type="evidence" value="ECO:0007669"/>
    <property type="project" value="UniProtKB-KW"/>
</dbReference>
<dbReference type="GO" id="GO:0016491">
    <property type="term" value="F:oxidoreductase activity"/>
    <property type="evidence" value="ECO:0007669"/>
    <property type="project" value="InterPro"/>
</dbReference>
<dbReference type="GO" id="GO:0015979">
    <property type="term" value="P:photosynthesis"/>
    <property type="evidence" value="ECO:0007669"/>
    <property type="project" value="UniProtKB-UniRule"/>
</dbReference>
<dbReference type="GO" id="GO:0022904">
    <property type="term" value="P:respiratory electron transport chain"/>
    <property type="evidence" value="ECO:0007669"/>
    <property type="project" value="InterPro"/>
</dbReference>
<dbReference type="CDD" id="cd00284">
    <property type="entry name" value="Cytochrome_b_N"/>
    <property type="match status" value="1"/>
</dbReference>
<dbReference type="FunFam" id="1.20.810.10:FF:000001">
    <property type="entry name" value="Cytochrome b6"/>
    <property type="match status" value="1"/>
</dbReference>
<dbReference type="Gene3D" id="1.20.810.10">
    <property type="entry name" value="Cytochrome Bc1 Complex, Chain C"/>
    <property type="match status" value="1"/>
</dbReference>
<dbReference type="HAMAP" id="MF_00633">
    <property type="entry name" value="Cytb6_f_cytb6"/>
    <property type="match status" value="1"/>
</dbReference>
<dbReference type="InterPro" id="IPR005797">
    <property type="entry name" value="Cyt_b/b6_N"/>
</dbReference>
<dbReference type="InterPro" id="IPR023530">
    <property type="entry name" value="Cyt_B6_PetB"/>
</dbReference>
<dbReference type="InterPro" id="IPR027387">
    <property type="entry name" value="Cytb/b6-like_sf"/>
</dbReference>
<dbReference type="InterPro" id="IPR048259">
    <property type="entry name" value="Cytochrome_b_N_euk/bac"/>
</dbReference>
<dbReference type="InterPro" id="IPR016174">
    <property type="entry name" value="Di-haem_cyt_TM"/>
</dbReference>
<dbReference type="NCBIfam" id="NF002990">
    <property type="entry name" value="PRK03735.1"/>
    <property type="match status" value="1"/>
</dbReference>
<dbReference type="PANTHER" id="PTHR19271">
    <property type="entry name" value="CYTOCHROME B"/>
    <property type="match status" value="1"/>
</dbReference>
<dbReference type="PANTHER" id="PTHR19271:SF16">
    <property type="entry name" value="CYTOCHROME B"/>
    <property type="match status" value="1"/>
</dbReference>
<dbReference type="Pfam" id="PF00033">
    <property type="entry name" value="Cytochrome_B"/>
    <property type="match status" value="1"/>
</dbReference>
<dbReference type="PIRSF" id="PIRSF000032">
    <property type="entry name" value="Cytochrome_b6"/>
    <property type="match status" value="1"/>
</dbReference>
<dbReference type="SUPFAM" id="SSF81342">
    <property type="entry name" value="Transmembrane di-heme cytochromes"/>
    <property type="match status" value="1"/>
</dbReference>
<dbReference type="PROSITE" id="PS51002">
    <property type="entry name" value="CYTB_NTER"/>
    <property type="match status" value="1"/>
</dbReference>
<comment type="function">
    <text evidence="1">Component of the cytochrome b6-f complex, which mediates electron transfer between photosystem II (PSII) and photosystem I (PSI), cyclic electron flow around PSI, and state transitions.</text>
</comment>
<comment type="cofactor">
    <cofactor evidence="1">
        <name>heme b</name>
        <dbReference type="ChEBI" id="CHEBI:60344"/>
    </cofactor>
    <text evidence="1">Binds 2 heme b groups non-covalently with two histidine residues as axial ligands.</text>
</comment>
<comment type="cofactor">
    <cofactor evidence="1">
        <name>heme c</name>
        <dbReference type="ChEBI" id="CHEBI:61717"/>
    </cofactor>
    <text evidence="1">Binds one heme group covalently by a single cysteine link with no axial amino acid ligand. This heme was named heme ci.</text>
</comment>
<comment type="subunit">
    <text evidence="1">The 4 large subunits of the cytochrome b6-f complex are cytochrome b6, subunit IV (17 kDa polypeptide, PetD), cytochrome f and the Rieske protein, while the 4 small subunits are PetG, PetL, PetM and PetN. The complex functions as a dimer.</text>
</comment>
<comment type="subcellular location">
    <subcellularLocation>
        <location evidence="1">Cellular thylakoid membrane</location>
        <topology evidence="1">Multi-pass membrane protein</topology>
    </subcellularLocation>
</comment>
<comment type="miscellaneous">
    <text evidence="1">Heme 1 (or BH or b566) is high-potential and absorbs at about 566 nm, and heme 2 (or BL or b562) is low-potential and absorbs at about 562 nm.</text>
</comment>
<comment type="similarity">
    <text evidence="1">Belongs to the cytochrome b family. PetB subfamily.</text>
</comment>
<accession>B7K1G1</accession>
<protein>
    <recommendedName>
        <fullName evidence="1">Cytochrome b6</fullName>
    </recommendedName>
</protein>
<reference key="1">
    <citation type="journal article" date="2011" name="MBio">
        <title>Novel metabolic attributes of the genus Cyanothece, comprising a group of unicellular nitrogen-fixing Cyanobacteria.</title>
        <authorList>
            <person name="Bandyopadhyay A."/>
            <person name="Elvitigala T."/>
            <person name="Welsh E."/>
            <person name="Stockel J."/>
            <person name="Liberton M."/>
            <person name="Min H."/>
            <person name="Sherman L.A."/>
            <person name="Pakrasi H.B."/>
        </authorList>
    </citation>
    <scope>NUCLEOTIDE SEQUENCE [LARGE SCALE GENOMIC DNA]</scope>
    <source>
        <strain>PCC 8801 / RF-1</strain>
    </source>
</reference>
<organism>
    <name type="scientific">Rippkaea orientalis (strain PCC 8801 / RF-1)</name>
    <name type="common">Cyanothece sp. (strain PCC 8801)</name>
    <dbReference type="NCBI Taxonomy" id="41431"/>
    <lineage>
        <taxon>Bacteria</taxon>
        <taxon>Bacillati</taxon>
        <taxon>Cyanobacteriota</taxon>
        <taxon>Cyanophyceae</taxon>
        <taxon>Oscillatoriophycideae</taxon>
        <taxon>Chroococcales</taxon>
        <taxon>Aphanothecaceae</taxon>
        <taxon>Rippkaea</taxon>
        <taxon>Rippkaea orientalis</taxon>
    </lineage>
</organism>
<sequence length="222" mass="25224">MFSKQVTDSPIYKWFDNRLEIQAISDDITSKYVPPHVNIFYCLGGITLVCFIIQFATGFAMTFYYKPTVTDAFASVQYIMNEVNFGWLIRSIHRWSASMMVLMMILHVFRVYLTGGFKKPRELTWMTGVILAVITVSFGVTGYSLPWDQVGYWAVKIVSGVPAAIPVVGDQMVELLRGGQSVGQATLTRFYSLHTFVFPWLIAVFMLMHFLMIRKQGISGPL</sequence>
<feature type="chain" id="PRO_1000130663" description="Cytochrome b6">
    <location>
        <begin position="1"/>
        <end position="222"/>
    </location>
</feature>
<feature type="transmembrane region" description="Helical" evidence="1">
    <location>
        <begin position="39"/>
        <end position="59"/>
    </location>
</feature>
<feature type="transmembrane region" description="Helical" evidence="1">
    <location>
        <begin position="97"/>
        <end position="117"/>
    </location>
</feature>
<feature type="transmembrane region" description="Helical" evidence="1">
    <location>
        <begin position="123"/>
        <end position="143"/>
    </location>
</feature>
<feature type="transmembrane region" description="Helical" evidence="1">
    <location>
        <begin position="193"/>
        <end position="213"/>
    </location>
</feature>
<feature type="binding site" description="covalent" evidence="1">
    <location>
        <position position="42"/>
    </location>
    <ligand>
        <name>heme c</name>
        <dbReference type="ChEBI" id="CHEBI:61717"/>
    </ligand>
</feature>
<feature type="binding site" description="axial binding residue" evidence="1">
    <location>
        <position position="93"/>
    </location>
    <ligand>
        <name>heme b</name>
        <dbReference type="ChEBI" id="CHEBI:60344"/>
        <label>2</label>
    </ligand>
    <ligandPart>
        <name>Fe</name>
        <dbReference type="ChEBI" id="CHEBI:18248"/>
    </ligandPart>
</feature>
<feature type="binding site" description="axial binding residue" evidence="1">
    <location>
        <position position="107"/>
    </location>
    <ligand>
        <name>heme b</name>
        <dbReference type="ChEBI" id="CHEBI:60344"/>
        <label>1</label>
    </ligand>
    <ligandPart>
        <name>Fe</name>
        <dbReference type="ChEBI" id="CHEBI:18248"/>
    </ligandPart>
</feature>
<feature type="binding site" description="axial binding residue" evidence="1">
    <location>
        <position position="194"/>
    </location>
    <ligand>
        <name>heme b</name>
        <dbReference type="ChEBI" id="CHEBI:60344"/>
        <label>2</label>
    </ligand>
    <ligandPart>
        <name>Fe</name>
        <dbReference type="ChEBI" id="CHEBI:18248"/>
    </ligandPart>
</feature>
<feature type="binding site" description="axial binding residue" evidence="1">
    <location>
        <position position="209"/>
    </location>
    <ligand>
        <name>heme b</name>
        <dbReference type="ChEBI" id="CHEBI:60344"/>
        <label>1</label>
    </ligand>
    <ligandPart>
        <name>Fe</name>
        <dbReference type="ChEBI" id="CHEBI:18248"/>
    </ligandPart>
</feature>
<keyword id="KW-0249">Electron transport</keyword>
<keyword id="KW-0349">Heme</keyword>
<keyword id="KW-0408">Iron</keyword>
<keyword id="KW-0472">Membrane</keyword>
<keyword id="KW-0479">Metal-binding</keyword>
<keyword id="KW-0602">Photosynthesis</keyword>
<keyword id="KW-1185">Reference proteome</keyword>
<keyword id="KW-0793">Thylakoid</keyword>
<keyword id="KW-0812">Transmembrane</keyword>
<keyword id="KW-1133">Transmembrane helix</keyword>
<keyword id="KW-0813">Transport</keyword>
<evidence type="ECO:0000255" key="1">
    <source>
        <dbReference type="HAMAP-Rule" id="MF_00633"/>
    </source>
</evidence>